<reference key="1">
    <citation type="journal article" date="2004" name="Genome Res.">
        <title>The status, quality, and expansion of the NIH full-length cDNA project: the Mammalian Gene Collection (MGC).</title>
        <authorList>
            <consortium name="The MGC Project Team"/>
        </authorList>
    </citation>
    <scope>NUCLEOTIDE SEQUENCE [LARGE SCALE MRNA]</scope>
    <source>
        <tissue>Lung</tissue>
    </source>
</reference>
<reference key="2">
    <citation type="submission" date="2000-07" db="EMBL/GenBank/DDBJ databases">
        <authorList>
            <consortium name="The European IMAGE consortium"/>
        </authorList>
    </citation>
    <scope>NUCLEOTIDE SEQUENCE [LARGE SCALE MRNA] OF 124-268</scope>
</reference>
<reference key="3">
    <citation type="journal article" date="2004" name="Am. J. Hum. Genet.">
        <title>Mutated MESP2 causes spondylocostal dysostosis in humans.</title>
        <authorList>
            <person name="Whittock N.V."/>
            <person name="Sparrow D.B."/>
            <person name="Wouters M.A."/>
            <person name="Sillence D."/>
            <person name="Ellard S."/>
            <person name="Dunwoodie S.L."/>
            <person name="Turnpenny P.D."/>
        </authorList>
    </citation>
    <scope>REPEATS</scope>
</reference>
<sequence length="268" mass="28501">MAQPLCPPLSESWMLSAAWGPTRRPPPSDKDCGRSLVSSPDSWGSTPADSPVASPARPGTLRDPRAPSVGRRGARSSRLGSGQRQSASEREKLRMRTLARALHELRRFLPPSVAPAGQSLTKIETLRLAIRYIGHLSAVLGLSEESLQRRCRQRGDAGSPRGCPLCPDDCPAQMQTRTQAEGQGQGRGLGLVSAVRAGASWGSPPACPGARAAPEPRDPPALFAEAACPEGQAMEPSPPSPLLPGDVLALLETWMPLSPLEWLPEEPK</sequence>
<protein>
    <recommendedName>
        <fullName>Mesoderm posterior protein 1</fullName>
    </recommendedName>
    <alternativeName>
        <fullName>Class C basic helix-loop-helix protein 5</fullName>
        <shortName>bHLHc5</shortName>
    </alternativeName>
</protein>
<feature type="chain" id="PRO_0000304404" description="Mesoderm posterior protein 1">
    <location>
        <begin position="1"/>
        <end position="268"/>
    </location>
</feature>
<feature type="domain" description="bHLH" evidence="2">
    <location>
        <begin position="82"/>
        <end position="136"/>
    </location>
</feature>
<feature type="repeat" description="1" evidence="4">
    <location>
        <begin position="182"/>
        <end position="183"/>
    </location>
</feature>
<feature type="repeat" description="2" evidence="4">
    <location>
        <begin position="184"/>
        <end position="185"/>
    </location>
</feature>
<feature type="region of interest" description="Disordered" evidence="3">
    <location>
        <begin position="17"/>
        <end position="93"/>
    </location>
</feature>
<feature type="region of interest" description="2 X 2 AA tandem repeats of G-Q">
    <location>
        <begin position="182"/>
        <end position="185"/>
    </location>
</feature>
<feature type="short sequence motif" description="CPLCP">
    <location>
        <begin position="163"/>
        <end position="167"/>
    </location>
</feature>
<feature type="compositionally biased region" description="Polar residues" evidence="3">
    <location>
        <begin position="36"/>
        <end position="48"/>
    </location>
</feature>
<feature type="compositionally biased region" description="Low complexity" evidence="3">
    <location>
        <begin position="66"/>
        <end position="86"/>
    </location>
</feature>
<feature type="sequence variant" id="VAR_035021" description="In dbSNP:rs6496598.">
    <original>A</original>
    <variation>P</variation>
    <location>
        <position position="53"/>
    </location>
</feature>
<feature type="sequence conflict" description="In Ref. 2; CAB93425/CAB93426." evidence="5" ref="2">
    <original>F</original>
    <variation>L</variation>
    <location>
        <position position="223"/>
    </location>
</feature>
<dbReference type="EMBL" id="BC006219">
    <property type="protein sequence ID" value="AAH06219.1"/>
    <property type="molecule type" value="mRNA"/>
</dbReference>
<dbReference type="EMBL" id="AL357533">
    <property type="protein sequence ID" value="CAB93425.1"/>
    <property type="molecule type" value="mRNA"/>
</dbReference>
<dbReference type="EMBL" id="AL357534">
    <property type="protein sequence ID" value="CAB93426.1"/>
    <property type="molecule type" value="mRNA"/>
</dbReference>
<dbReference type="CCDS" id="CCDS10355.1"/>
<dbReference type="RefSeq" id="NP_061140.1">
    <property type="nucleotide sequence ID" value="NM_018670.4"/>
</dbReference>
<dbReference type="SMR" id="Q9BRJ9"/>
<dbReference type="BioGRID" id="120985">
    <property type="interactions" value="9"/>
</dbReference>
<dbReference type="FunCoup" id="Q9BRJ9">
    <property type="interactions" value="643"/>
</dbReference>
<dbReference type="IntAct" id="Q9BRJ9">
    <property type="interactions" value="2"/>
</dbReference>
<dbReference type="STRING" id="9606.ENSP00000300057"/>
<dbReference type="GlyGen" id="Q9BRJ9">
    <property type="glycosylation" value="1 site"/>
</dbReference>
<dbReference type="iPTMnet" id="Q9BRJ9"/>
<dbReference type="PhosphoSitePlus" id="Q9BRJ9"/>
<dbReference type="BioMuta" id="MESP1"/>
<dbReference type="DMDM" id="74732894"/>
<dbReference type="PaxDb" id="9606-ENSP00000300057"/>
<dbReference type="PeptideAtlas" id="Q9BRJ9"/>
<dbReference type="Antibodypedia" id="28662">
    <property type="antibodies" value="322 antibodies from 31 providers"/>
</dbReference>
<dbReference type="DNASU" id="55897"/>
<dbReference type="Ensembl" id="ENST00000300057.5">
    <property type="protein sequence ID" value="ENSP00000300057.4"/>
    <property type="gene ID" value="ENSG00000166823.6"/>
</dbReference>
<dbReference type="GeneID" id="55897"/>
<dbReference type="KEGG" id="hsa:55897"/>
<dbReference type="MANE-Select" id="ENST00000300057.5">
    <property type="protein sequence ID" value="ENSP00000300057.4"/>
    <property type="RefSeq nucleotide sequence ID" value="NM_018670.4"/>
    <property type="RefSeq protein sequence ID" value="NP_061140.1"/>
</dbReference>
<dbReference type="UCSC" id="uc002bol.4">
    <property type="organism name" value="human"/>
</dbReference>
<dbReference type="AGR" id="HGNC:29658"/>
<dbReference type="CTD" id="55897"/>
<dbReference type="DisGeNET" id="55897"/>
<dbReference type="GeneCards" id="MESP1"/>
<dbReference type="HGNC" id="HGNC:29658">
    <property type="gene designation" value="MESP1"/>
</dbReference>
<dbReference type="HPA" id="ENSG00000166823">
    <property type="expression patterns" value="Tissue enhanced (adipose tissue, prostate, skeletal muscle)"/>
</dbReference>
<dbReference type="MalaCards" id="MESP1"/>
<dbReference type="MIM" id="608689">
    <property type="type" value="gene"/>
</dbReference>
<dbReference type="neXtProt" id="NX_Q9BRJ9"/>
<dbReference type="OpenTargets" id="ENSG00000166823"/>
<dbReference type="PharmGKB" id="PA142671468"/>
<dbReference type="VEuPathDB" id="HostDB:ENSG00000166823"/>
<dbReference type="eggNOG" id="KOG4029">
    <property type="taxonomic scope" value="Eukaryota"/>
</dbReference>
<dbReference type="GeneTree" id="ENSGT00530000063712"/>
<dbReference type="HOGENOM" id="CLU_064749_1_0_1"/>
<dbReference type="InParanoid" id="Q9BRJ9"/>
<dbReference type="OMA" id="PLSESWM"/>
<dbReference type="OrthoDB" id="9946827at2759"/>
<dbReference type="PAN-GO" id="Q9BRJ9">
    <property type="GO annotations" value="7 GO annotations based on evolutionary models"/>
</dbReference>
<dbReference type="PhylomeDB" id="Q9BRJ9"/>
<dbReference type="TreeFam" id="TF325707"/>
<dbReference type="PathwayCommons" id="Q9BRJ9"/>
<dbReference type="Reactome" id="R-HSA-9733709">
    <property type="pathway name" value="Cardiogenesis"/>
</dbReference>
<dbReference type="SignaLink" id="Q9BRJ9"/>
<dbReference type="BioGRID-ORCS" id="55897">
    <property type="hits" value="15 hits in 1168 CRISPR screens"/>
</dbReference>
<dbReference type="ChiTaRS" id="MESP1">
    <property type="organism name" value="human"/>
</dbReference>
<dbReference type="GenomeRNAi" id="55897"/>
<dbReference type="Pharos" id="Q9BRJ9">
    <property type="development level" value="Tbio"/>
</dbReference>
<dbReference type="PRO" id="PR:Q9BRJ9"/>
<dbReference type="Proteomes" id="UP000005640">
    <property type="component" value="Chromosome 15"/>
</dbReference>
<dbReference type="RNAct" id="Q9BRJ9">
    <property type="molecule type" value="protein"/>
</dbReference>
<dbReference type="Bgee" id="ENSG00000166823">
    <property type="expression patterns" value="Expressed in mucosa of transverse colon and 137 other cell types or tissues"/>
</dbReference>
<dbReference type="GO" id="GO:0000785">
    <property type="term" value="C:chromatin"/>
    <property type="evidence" value="ECO:0000247"/>
    <property type="project" value="NTNU_SB"/>
</dbReference>
<dbReference type="GO" id="GO:0005634">
    <property type="term" value="C:nucleus"/>
    <property type="evidence" value="ECO:0000318"/>
    <property type="project" value="GO_Central"/>
</dbReference>
<dbReference type="GO" id="GO:0001228">
    <property type="term" value="F:DNA-binding transcription activator activity, RNA polymerase II-specific"/>
    <property type="evidence" value="ECO:0007669"/>
    <property type="project" value="Ensembl"/>
</dbReference>
<dbReference type="GO" id="GO:0003700">
    <property type="term" value="F:DNA-binding transcription factor activity"/>
    <property type="evidence" value="ECO:0000314"/>
    <property type="project" value="BHF-UCL"/>
</dbReference>
<dbReference type="GO" id="GO:0000981">
    <property type="term" value="F:DNA-binding transcription factor activity, RNA polymerase II-specific"/>
    <property type="evidence" value="ECO:0000247"/>
    <property type="project" value="NTNU_SB"/>
</dbReference>
<dbReference type="GO" id="GO:0046983">
    <property type="term" value="F:protein dimerization activity"/>
    <property type="evidence" value="ECO:0007669"/>
    <property type="project" value="InterPro"/>
</dbReference>
<dbReference type="GO" id="GO:0000978">
    <property type="term" value="F:RNA polymerase II cis-regulatory region sequence-specific DNA binding"/>
    <property type="evidence" value="ECO:0000318"/>
    <property type="project" value="GO_Central"/>
</dbReference>
<dbReference type="GO" id="GO:0000976">
    <property type="term" value="F:transcription cis-regulatory region binding"/>
    <property type="evidence" value="ECO:0000314"/>
    <property type="project" value="BHF-UCL"/>
</dbReference>
<dbReference type="GO" id="GO:0003210">
    <property type="term" value="P:cardiac atrium formation"/>
    <property type="evidence" value="ECO:0000315"/>
    <property type="project" value="BHF-UCL"/>
</dbReference>
<dbReference type="GO" id="GO:0060913">
    <property type="term" value="P:cardiac cell fate determination"/>
    <property type="evidence" value="ECO:0000250"/>
    <property type="project" value="BHF-UCL"/>
</dbReference>
<dbReference type="GO" id="GO:0055007">
    <property type="term" value="P:cardiac muscle cell differentiation"/>
    <property type="evidence" value="ECO:0000315"/>
    <property type="project" value="BHF-UCL"/>
</dbReference>
<dbReference type="GO" id="GO:0060947">
    <property type="term" value="P:cardiac vascular smooth muscle cell differentiation"/>
    <property type="evidence" value="ECO:0000315"/>
    <property type="project" value="BHF-UCL"/>
</dbReference>
<dbReference type="GO" id="GO:0003211">
    <property type="term" value="P:cardiac ventricle formation"/>
    <property type="evidence" value="ECO:0000315"/>
    <property type="project" value="BHF-UCL"/>
</dbReference>
<dbReference type="GO" id="GO:0003259">
    <property type="term" value="P:cardioblast anterior-lateral migration"/>
    <property type="evidence" value="ECO:0000250"/>
    <property type="project" value="BHF-UCL"/>
</dbReference>
<dbReference type="GO" id="GO:0060975">
    <property type="term" value="P:cardioblast migration to the midline involved in heart field formation"/>
    <property type="evidence" value="ECO:0000250"/>
    <property type="project" value="BHF-UCL"/>
</dbReference>
<dbReference type="GO" id="GO:0003143">
    <property type="term" value="P:embryonic heart tube morphogenesis"/>
    <property type="evidence" value="ECO:0000250"/>
    <property type="project" value="BHF-UCL"/>
</dbReference>
<dbReference type="GO" id="GO:0045446">
    <property type="term" value="P:endothelial cell differentiation"/>
    <property type="evidence" value="ECO:0000315"/>
    <property type="project" value="BHF-UCL"/>
</dbReference>
<dbReference type="GO" id="GO:0007369">
    <property type="term" value="P:gastrulation"/>
    <property type="evidence" value="ECO:0000250"/>
    <property type="project" value="BHF-UCL"/>
</dbReference>
<dbReference type="GO" id="GO:0010467">
    <property type="term" value="P:gene expression"/>
    <property type="evidence" value="ECO:0007669"/>
    <property type="project" value="Ensembl"/>
</dbReference>
<dbReference type="GO" id="GO:0003241">
    <property type="term" value="P:growth involved in heart morphogenesis"/>
    <property type="evidence" value="ECO:0000250"/>
    <property type="project" value="BHF-UCL"/>
</dbReference>
<dbReference type="GO" id="GO:0003129">
    <property type="term" value="P:heart induction"/>
    <property type="evidence" value="ECO:0000250"/>
    <property type="project" value="BHF-UCL"/>
</dbReference>
<dbReference type="GO" id="GO:0001947">
    <property type="term" value="P:heart looping"/>
    <property type="evidence" value="ECO:0000250"/>
    <property type="project" value="BHF-UCL"/>
</dbReference>
<dbReference type="GO" id="GO:0003007">
    <property type="term" value="P:heart morphogenesis"/>
    <property type="evidence" value="ECO:0000318"/>
    <property type="project" value="GO_Central"/>
</dbReference>
<dbReference type="GO" id="GO:0048368">
    <property type="term" value="P:lateral mesoderm development"/>
    <property type="evidence" value="ECO:0000250"/>
    <property type="project" value="BHF-UCL"/>
</dbReference>
<dbReference type="GO" id="GO:0001707">
    <property type="term" value="P:mesoderm formation"/>
    <property type="evidence" value="ECO:0000318"/>
    <property type="project" value="GO_Central"/>
</dbReference>
<dbReference type="GO" id="GO:0008078">
    <property type="term" value="P:mesodermal cell migration"/>
    <property type="evidence" value="ECO:0007669"/>
    <property type="project" value="Ensembl"/>
</dbReference>
<dbReference type="GO" id="GO:0090090">
    <property type="term" value="P:negative regulation of canonical Wnt signaling pathway"/>
    <property type="evidence" value="ECO:0000250"/>
    <property type="project" value="BHF-UCL"/>
</dbReference>
<dbReference type="GO" id="GO:0045892">
    <property type="term" value="P:negative regulation of DNA-templated transcription"/>
    <property type="evidence" value="ECO:0000250"/>
    <property type="project" value="BHF-UCL"/>
</dbReference>
<dbReference type="GO" id="GO:0042664">
    <property type="term" value="P:negative regulation of endodermal cell fate specification"/>
    <property type="evidence" value="ECO:0000250"/>
    <property type="project" value="BHF-UCL"/>
</dbReference>
<dbReference type="GO" id="GO:0042662">
    <property type="term" value="P:negative regulation of mesodermal cell fate specification"/>
    <property type="evidence" value="ECO:0000250"/>
    <property type="project" value="BHF-UCL"/>
</dbReference>
<dbReference type="GO" id="GO:0022008">
    <property type="term" value="P:neurogenesis"/>
    <property type="evidence" value="ECO:0000315"/>
    <property type="project" value="BHF-UCL"/>
</dbReference>
<dbReference type="GO" id="GO:0007219">
    <property type="term" value="P:Notch signaling pathway"/>
    <property type="evidence" value="ECO:0007669"/>
    <property type="project" value="UniProtKB-KW"/>
</dbReference>
<dbReference type="GO" id="GO:0045893">
    <property type="term" value="P:positive regulation of DNA-templated transcription"/>
    <property type="evidence" value="ECO:0000250"/>
    <property type="project" value="BHF-UCL"/>
</dbReference>
<dbReference type="GO" id="GO:0070368">
    <property type="term" value="P:positive regulation of hepatocyte differentiation"/>
    <property type="evidence" value="ECO:0000250"/>
    <property type="project" value="BHF-UCL"/>
</dbReference>
<dbReference type="GO" id="GO:0045747">
    <property type="term" value="P:positive regulation of Notch signaling pathway"/>
    <property type="evidence" value="ECO:0000250"/>
    <property type="project" value="BHF-UCL"/>
</dbReference>
<dbReference type="GO" id="GO:0051155">
    <property type="term" value="P:positive regulation of striated muscle cell differentiation"/>
    <property type="evidence" value="ECO:0000250"/>
    <property type="project" value="BHF-UCL"/>
</dbReference>
<dbReference type="GO" id="GO:0045944">
    <property type="term" value="P:positive regulation of transcription by RNA polymerase II"/>
    <property type="evidence" value="ECO:0000314"/>
    <property type="project" value="BHF-UCL"/>
</dbReference>
<dbReference type="GO" id="GO:0006357">
    <property type="term" value="P:regulation of transcription by RNA polymerase II"/>
    <property type="evidence" value="ECO:0000318"/>
    <property type="project" value="GO_Central"/>
</dbReference>
<dbReference type="GO" id="GO:0003139">
    <property type="term" value="P:secondary heart field specification"/>
    <property type="evidence" value="ECO:0000250"/>
    <property type="project" value="BHF-UCL"/>
</dbReference>
<dbReference type="GO" id="GO:0023019">
    <property type="term" value="P:signal transduction involved in regulation of gene expression"/>
    <property type="evidence" value="ECO:0007669"/>
    <property type="project" value="Ensembl"/>
</dbReference>
<dbReference type="GO" id="GO:0060921">
    <property type="term" value="P:sinoatrial node cell differentiation"/>
    <property type="evidence" value="ECO:0000315"/>
    <property type="project" value="BHF-UCL"/>
</dbReference>
<dbReference type="GO" id="GO:0003236">
    <property type="term" value="P:sinus venosus morphogenesis"/>
    <property type="evidence" value="ECO:0000250"/>
    <property type="project" value="BHF-UCL"/>
</dbReference>
<dbReference type="GO" id="GO:0032525">
    <property type="term" value="P:somite rostral/caudal axis specification"/>
    <property type="evidence" value="ECO:0000318"/>
    <property type="project" value="GO_Central"/>
</dbReference>
<dbReference type="CDD" id="cd18938">
    <property type="entry name" value="bHLH_TS_Mesp"/>
    <property type="match status" value="1"/>
</dbReference>
<dbReference type="FunFam" id="4.10.280.10:FF:000047">
    <property type="entry name" value="mesoderm posterior protein 1"/>
    <property type="match status" value="1"/>
</dbReference>
<dbReference type="Gene3D" id="4.10.280.10">
    <property type="entry name" value="Helix-loop-helix DNA-binding domain"/>
    <property type="match status" value="1"/>
</dbReference>
<dbReference type="InterPro" id="IPR011598">
    <property type="entry name" value="bHLH_dom"/>
</dbReference>
<dbReference type="InterPro" id="IPR036638">
    <property type="entry name" value="HLH_DNA-bd_sf"/>
</dbReference>
<dbReference type="InterPro" id="IPR040259">
    <property type="entry name" value="Mesogenin/MesP"/>
</dbReference>
<dbReference type="PANTHER" id="PTHR20937">
    <property type="entry name" value="IP14615P"/>
    <property type="match status" value="1"/>
</dbReference>
<dbReference type="PANTHER" id="PTHR20937:SF6">
    <property type="entry name" value="MESODERM POSTERIOR PROTEIN 1"/>
    <property type="match status" value="1"/>
</dbReference>
<dbReference type="Pfam" id="PF00010">
    <property type="entry name" value="HLH"/>
    <property type="match status" value="1"/>
</dbReference>
<dbReference type="SMART" id="SM00353">
    <property type="entry name" value="HLH"/>
    <property type="match status" value="1"/>
</dbReference>
<dbReference type="SUPFAM" id="SSF47459">
    <property type="entry name" value="HLH, helix-loop-helix DNA-binding domain"/>
    <property type="match status" value="1"/>
</dbReference>
<dbReference type="PROSITE" id="PS50888">
    <property type="entry name" value="BHLH"/>
    <property type="match status" value="1"/>
</dbReference>
<gene>
    <name type="primary">MESP1</name>
    <name type="synonym">BHLHC5</name>
</gene>
<evidence type="ECO:0000250" key="1"/>
<evidence type="ECO:0000255" key="2">
    <source>
        <dbReference type="PROSITE-ProRule" id="PRU00981"/>
    </source>
</evidence>
<evidence type="ECO:0000256" key="3">
    <source>
        <dbReference type="SAM" id="MobiDB-lite"/>
    </source>
</evidence>
<evidence type="ECO:0000269" key="4">
    <source>
    </source>
</evidence>
<evidence type="ECO:0000305" key="5"/>
<name>MESP1_HUMAN</name>
<keyword id="KW-0217">Developmental protein</keyword>
<keyword id="KW-0238">DNA-binding</keyword>
<keyword id="KW-0914">Notch signaling pathway</keyword>
<keyword id="KW-0539">Nucleus</keyword>
<keyword id="KW-1267">Proteomics identification</keyword>
<keyword id="KW-1185">Reference proteome</keyword>
<keyword id="KW-0677">Repeat</keyword>
<keyword id="KW-0804">Transcription</keyword>
<keyword id="KW-0805">Transcription regulation</keyword>
<organism>
    <name type="scientific">Homo sapiens</name>
    <name type="common">Human</name>
    <dbReference type="NCBI Taxonomy" id="9606"/>
    <lineage>
        <taxon>Eukaryota</taxon>
        <taxon>Metazoa</taxon>
        <taxon>Chordata</taxon>
        <taxon>Craniata</taxon>
        <taxon>Vertebrata</taxon>
        <taxon>Euteleostomi</taxon>
        <taxon>Mammalia</taxon>
        <taxon>Eutheria</taxon>
        <taxon>Euarchontoglires</taxon>
        <taxon>Primates</taxon>
        <taxon>Haplorrhini</taxon>
        <taxon>Catarrhini</taxon>
        <taxon>Hominidae</taxon>
        <taxon>Homo</taxon>
    </lineage>
</organism>
<accession>Q9BRJ9</accession>
<accession>Q9NSF1</accession>
<accession>Q9NSF2</accession>
<comment type="function">
    <text evidence="1">Transcription factor. Plays a role in the epithelialization of somitic mesoderm and in the development of cardiac mesoderm. Defines the rostrocaudal patterning of the somites by participating in distinct Notch pathways (By similarity).</text>
</comment>
<comment type="interaction">
    <interactant intactId="EBI-21944954">
        <id>Q9BRJ9</id>
    </interactant>
    <interactant intactId="EBI-5235340">
        <id>Q7Z699</id>
        <label>SPRED1</label>
    </interactant>
    <organismsDiffer>false</organismsDiffer>
    <experiments>3</experiments>
</comment>
<comment type="subcellular location">
    <subcellularLocation>
        <location evidence="5">Nucleus</location>
    </subcellularLocation>
</comment>
<comment type="miscellaneous">
    <text>The N- and C-terminal domains are separated by a 2-repeat G-Q region.</text>
</comment>
<proteinExistence type="evidence at protein level"/>